<protein>
    <recommendedName>
        <fullName evidence="5">Serine/threonine-protein phosphatase 2A regulatory subunit pptr-1</fullName>
    </recommendedName>
    <alternativeName>
        <fullName evidence="5">Serine/threonine-protein phosphatase 2A 56kDa regulatory subunit pptr-1</fullName>
    </alternativeName>
    <alternativeName>
        <fullName evidence="5">Serine/threonine-protein phosphatase 2A regulatory subunit B' pptr-1</fullName>
    </alternativeName>
</protein>
<feature type="chain" id="PRO_0000437754" description="Serine/threonine-protein phosphatase 2A regulatory subunit pptr-1" evidence="5">
    <location>
        <begin position="1"/>
        <end position="542"/>
    </location>
</feature>
<feature type="region of interest" description="Disordered" evidence="1">
    <location>
        <begin position="1"/>
        <end position="28"/>
    </location>
</feature>
<feature type="region of interest" description="Disordered" evidence="1">
    <location>
        <begin position="500"/>
        <end position="542"/>
    </location>
</feature>
<feature type="compositionally biased region" description="Polar residues" evidence="1">
    <location>
        <begin position="528"/>
        <end position="542"/>
    </location>
</feature>
<proteinExistence type="evidence at protein level"/>
<accession>O18178</accession>
<sequence length="542" mass="61835">MHGSGHSLTGAPHQIPPPRTQGAATGGQQLSATANQFVDKIDPFHNKRGTSRRLRINNSSRYNVDSAQELVQLALIKDTAANEQPALVIEKLVQCQHVFDFYDPVAQLKCKEIKRAALNELIDHITSTKGAIVETIYPAVIKMVAKNIFRVLPPSENCEFDPEEDEPTLEVSWPHLQLVYELFLRFLESPDFQASIGKKYIDQRFVLKLLDLFDSEDPRERDFLKTVLHRIYGKFLGLRAFIRKHINNMFLRFVYETDSFNGVGELLEILGSIINGFALPLKQEHKVFLVKVLLPLHKPKCLSLYHAQLAYCVVQFIEKDSSLTPQVFEALLKFWPRTCSSKEVMFLGEVEEILDIIEPEQFKKIIDPLFRQLAKCVSSPHFQVAERALYFWNNEYILSLIEDTSSLVMPIMFPALYRISKEHWNQTIVALVYNVLKTFMEMNGKLFDELTSTYKGERLREKQREKDRDAFWKKMEALELNPPAEGKEVTPSLFPEKLTDYLKKDGPNMTPLPVATAGGGDKSPSVVKKSSTGSETTTPAKK</sequence>
<name>2A51_CAEEL</name>
<organism evidence="7">
    <name type="scientific">Caenorhabditis elegans</name>
    <dbReference type="NCBI Taxonomy" id="6239"/>
    <lineage>
        <taxon>Eukaryota</taxon>
        <taxon>Metazoa</taxon>
        <taxon>Ecdysozoa</taxon>
        <taxon>Nematoda</taxon>
        <taxon>Chromadorea</taxon>
        <taxon>Rhabditida</taxon>
        <taxon>Rhabditina</taxon>
        <taxon>Rhabditomorpha</taxon>
        <taxon>Rhabditoidea</taxon>
        <taxon>Rhabditidae</taxon>
        <taxon>Peloderinae</taxon>
        <taxon>Caenorhabditis</taxon>
    </lineage>
</organism>
<evidence type="ECO:0000256" key="1">
    <source>
        <dbReference type="SAM" id="MobiDB-lite"/>
    </source>
</evidence>
<evidence type="ECO:0000269" key="2">
    <source>
    </source>
</evidence>
<evidence type="ECO:0000269" key="3">
    <source>
    </source>
</evidence>
<evidence type="ECO:0000269" key="4">
    <source>
    </source>
</evidence>
<evidence type="ECO:0000305" key="5"/>
<evidence type="ECO:0000305" key="6">
    <source>
    </source>
</evidence>
<evidence type="ECO:0000312" key="7">
    <source>
        <dbReference type="Proteomes" id="UP000001940"/>
    </source>
</evidence>
<evidence type="ECO:0000312" key="8">
    <source>
        <dbReference type="WormBase" id="W08G11.4"/>
    </source>
</evidence>
<reference evidence="7" key="1">
    <citation type="journal article" date="1998" name="Science">
        <title>Genome sequence of the nematode C. elegans: a platform for investigating biology.</title>
        <authorList>
            <consortium name="The C. elegans sequencing consortium"/>
        </authorList>
    </citation>
    <scope>NUCLEOTIDE SEQUENCE [LARGE SCALE GENOMIC DNA]</scope>
    <source>
        <strain evidence="7">Bristol N2</strain>
    </source>
</reference>
<reference evidence="5" key="2">
    <citation type="journal article" date="2009" name="Cell">
        <title>A PP2A regulatory subunit regulates C. elegans insulin/IGF-1 signaling by modulating AKT-1 phosphorylation.</title>
        <authorList>
            <person name="Padmanabhan S."/>
            <person name="Mukhopadhyay A."/>
            <person name="Narasimhan S.D."/>
            <person name="Tesz G."/>
            <person name="Czech M.P."/>
            <person name="Tissenbaum H.A."/>
        </authorList>
    </citation>
    <scope>FUNCTION</scope>
    <scope>INTERACTION WITH AKT-1 AND SGK-1</scope>
    <scope>SUBCELLULAR LOCATION</scope>
    <scope>TISSUE SPECIFICITY</scope>
    <scope>DISRUPTION PHENOTYPE</scope>
</reference>
<reference evidence="5" key="3">
    <citation type="journal article" date="2010" name="Science">
        <title>Cytoplasmic partitioning of P granule components is not required to specify the germline in C. elegans.</title>
        <authorList>
            <person name="Gallo C.M."/>
            <person name="Wang J.T."/>
            <person name="Motegi F."/>
            <person name="Seydoux G."/>
        </authorList>
    </citation>
    <scope>FUNCTION</scope>
    <scope>DISRUPTION PHENOTYPE</scope>
</reference>
<reference key="4">
    <citation type="journal article" date="2014" name="Elife">
        <title>Regulation of RNA granule dynamics by phosphorylation of serine-rich, intrinsically disordered proteins in C. elegans.</title>
        <authorList>
            <person name="Wang J.T."/>
            <person name="Smith J."/>
            <person name="Chen B.C."/>
            <person name="Schmidt H."/>
            <person name="Rasoloson D."/>
            <person name="Paix A."/>
            <person name="Lambrus B.G."/>
            <person name="Calidas D."/>
            <person name="Betzig E."/>
            <person name="Seydoux G."/>
        </authorList>
    </citation>
    <scope>FUNCTION</scope>
    <scope>SUBUNIT</scope>
    <scope>INTERACTION WITH MEG-1; MEG-3 AND MEG-4</scope>
</reference>
<keyword id="KW-0963">Cytoplasm</keyword>
<keyword id="KW-1185">Reference proteome</keyword>
<comment type="function">
    <text evidence="2 3 4">Probable regulatory subunit of serine/threonine-protein phosphatase let-92 which negatively regulates the insulin receptor signaling cascade composed of daf-2, age-1, akt-1, akt-2 and sgk-1 by promoting the dephosphorylation of akt-1 on 'Thr-350' (PubMed:19249087). Negatively regulates several functions controlled by the insulin pathway including dauer formation, lifespan, fat storage and stress resistance (PubMed:19249087). Plays a role in the asymmetric segregation of the P granule components during embryonic cell divisions but does not play an essential role in specifying germ cell fate (PubMed:21127218). Within a PP2A phosphatase complex, acts redundantly with pptr-2, to dephosphorylate P granule components including meg-1 and meg-3 to promote the assembly and accumulation of zygotic P granules in the posterior cytoplasm during zygote polarization, and thus maintain P granule distribution and segregation in early stage embryos following meiosis (PubMed:25535836). In adults, required to promote germ cell proliferation and differentiation when exposed to thermic stress (PubMed:21127218).</text>
</comment>
<comment type="subunit">
    <text evidence="2 4 5 6">Part of a complex consisting of a common heterodimeric core enzyme, composed of catalytic subunit let-92 and constant regulatory subunit paa-1, that associates with a variety of regulatory subunits which confer distinct properties to the holoenzyme (Probable). Interacts with akt-1 but not akt-2 (PubMed:19249087). Interacts with sgk-1 (PubMed:19249087). Interacts with P granule components meg-1, meg-3 and meg-4 (PubMed:25535836).</text>
</comment>
<comment type="interaction">
    <interactant intactId="EBI-2298122">
        <id>O18178</id>
    </interactant>
    <interactant intactId="EBI-1770718">
        <id>Q17941</id>
        <label>akt-1</label>
    </interactant>
    <organismsDiffer>false</organismsDiffer>
    <experiments>3</experiments>
</comment>
<comment type="subcellular location">
    <subcellularLocation>
        <location evidence="2">Cytoplasm</location>
    </subcellularLocation>
</comment>
<comment type="tissue specificity">
    <text evidence="2">Expressed in pharynx, vulva and spermatheca.</text>
</comment>
<comment type="disruption phenotype">
    <text evidence="2 3">Mutants have small gonads and the number of progeny is reduced (PubMed:21127218). At higher temperatures, 20 percent of mutants are sterile with no gametes (PubMed:21127218). Mutant embryos display several defects in P granule partitioning during the first cell divisions. Unlike in wild-type, plg-1-positive granules becomes unstable during mitosis resulting in their disassembly and in the loss of asymmetric segregation of plg-1 between somatic and germline blastomeres (PubMed:21127218). plg-1-positive granules reform during interphase but are fewer and smaller (PubMed:21127218). By the 100-cell stage, only small granules remain, and these are not enriched in Z2/Z3 primordial germ cells compared to wild-type. In addition, asymmetric segregation of cey-2 and nos-2 mRNAs, 2 components of P granules, is lost without affecting their degradation in the somatic lineage after cell division (PubMed:21127218). RNAi-mediated knockdown suppresses constitutive dauer formation, and, increases lifespan, fat storage and thermotolerance and reduces daf-16 nuclear localization in a daf-2 (e1370) mutant background (PubMed:19249087).</text>
</comment>
<comment type="similarity">
    <text evidence="5">Belongs to the phosphatase 2A regulatory subunit B56 family.</text>
</comment>
<gene>
    <name evidence="8" type="primary">pptr-1</name>
    <name evidence="8" type="ORF">W08G11.4</name>
</gene>
<dbReference type="EMBL" id="BX284605">
    <property type="protein sequence ID" value="CAB07297.4"/>
    <property type="molecule type" value="Genomic_DNA"/>
</dbReference>
<dbReference type="RefSeq" id="NP_507133.4">
    <property type="nucleotide sequence ID" value="NM_074732.5"/>
</dbReference>
<dbReference type="SMR" id="O18178"/>
<dbReference type="ComplexPortal" id="CPX-1367">
    <property type="entry name" value="PP2A-PPTR-1 phosphatase complex"/>
</dbReference>
<dbReference type="FunCoup" id="O18178">
    <property type="interactions" value="3143"/>
</dbReference>
<dbReference type="IntAct" id="O18178">
    <property type="interactions" value="3"/>
</dbReference>
<dbReference type="STRING" id="6239.W08G11.4.1"/>
<dbReference type="PaxDb" id="6239-W08G11.4"/>
<dbReference type="PeptideAtlas" id="O18178"/>
<dbReference type="EnsemblMetazoa" id="W08G11.4.1">
    <property type="protein sequence ID" value="W08G11.4.1"/>
    <property type="gene ID" value="WBGene00012348"/>
</dbReference>
<dbReference type="GeneID" id="180100"/>
<dbReference type="KEGG" id="cel:CELE_W08G11.4"/>
<dbReference type="UCSC" id="W08G11.4">
    <property type="organism name" value="c. elegans"/>
</dbReference>
<dbReference type="AGR" id="WB:WBGene00012348"/>
<dbReference type="CTD" id="180100"/>
<dbReference type="WormBase" id="W08G11.4">
    <property type="protein sequence ID" value="CE32003"/>
    <property type="gene ID" value="WBGene00012348"/>
    <property type="gene designation" value="pptr-1"/>
</dbReference>
<dbReference type="eggNOG" id="KOG2085">
    <property type="taxonomic scope" value="Eukaryota"/>
</dbReference>
<dbReference type="GeneTree" id="ENSGT01030000234620"/>
<dbReference type="HOGENOM" id="CLU_012437_4_0_1"/>
<dbReference type="InParanoid" id="O18178"/>
<dbReference type="OMA" id="MVPLFCR"/>
<dbReference type="OrthoDB" id="10264446at2759"/>
<dbReference type="PhylomeDB" id="O18178"/>
<dbReference type="Reactome" id="R-CEL-195253">
    <property type="pathway name" value="Degradation of beta-catenin by the destruction complex"/>
</dbReference>
<dbReference type="Reactome" id="R-CEL-196299">
    <property type="pathway name" value="Beta-catenin phosphorylation cascade"/>
</dbReference>
<dbReference type="Reactome" id="R-CEL-389513">
    <property type="pathway name" value="Co-inhibition by CTLA4"/>
</dbReference>
<dbReference type="Reactome" id="R-CEL-5673000">
    <property type="pathway name" value="RAF activation"/>
</dbReference>
<dbReference type="Reactome" id="R-CEL-5675221">
    <property type="pathway name" value="Negative regulation of MAPK pathway"/>
</dbReference>
<dbReference type="Reactome" id="R-CEL-6811558">
    <property type="pathway name" value="PI5P, PP2A and IER3 Regulate PI3K/AKT Signaling"/>
</dbReference>
<dbReference type="Reactome" id="R-CEL-9833482">
    <property type="pathway name" value="PKR-mediated signaling"/>
</dbReference>
<dbReference type="SignaLink" id="O18178"/>
<dbReference type="PRO" id="PR:O18178"/>
<dbReference type="Proteomes" id="UP000001940">
    <property type="component" value="Chromosome V"/>
</dbReference>
<dbReference type="Bgee" id="WBGene00012348">
    <property type="expression patterns" value="Expressed in pharyngeal muscle cell (C elegans) and 4 other cell types or tissues"/>
</dbReference>
<dbReference type="GO" id="GO:0005829">
    <property type="term" value="C:cytosol"/>
    <property type="evidence" value="ECO:0000314"/>
    <property type="project" value="WormBase"/>
</dbReference>
<dbReference type="GO" id="GO:0005634">
    <property type="term" value="C:nucleus"/>
    <property type="evidence" value="ECO:0000318"/>
    <property type="project" value="GO_Central"/>
</dbReference>
<dbReference type="GO" id="GO:0000159">
    <property type="term" value="C:protein phosphatase type 2A complex"/>
    <property type="evidence" value="ECO:0000318"/>
    <property type="project" value="GO_Central"/>
</dbReference>
<dbReference type="GO" id="GO:0019901">
    <property type="term" value="F:protein kinase binding"/>
    <property type="evidence" value="ECO:0000353"/>
    <property type="project" value="WormBase"/>
</dbReference>
<dbReference type="GO" id="GO:0072542">
    <property type="term" value="F:protein phosphatase activator activity"/>
    <property type="evidence" value="ECO:0000315"/>
    <property type="project" value="WormBase"/>
</dbReference>
<dbReference type="GO" id="GO:0040024">
    <property type="term" value="P:dauer larval development"/>
    <property type="evidence" value="ECO:0000316"/>
    <property type="project" value="WormBase"/>
</dbReference>
<dbReference type="GO" id="GO:0008340">
    <property type="term" value="P:determination of adult lifespan"/>
    <property type="evidence" value="ECO:0000316"/>
    <property type="project" value="WormBase"/>
</dbReference>
<dbReference type="GO" id="GO:0046627">
    <property type="term" value="P:negative regulation of insulin receptor signaling pathway"/>
    <property type="evidence" value="ECO:0000316"/>
    <property type="project" value="WormBase"/>
</dbReference>
<dbReference type="GO" id="GO:1903863">
    <property type="term" value="P:P granule assembly"/>
    <property type="evidence" value="ECO:0000315"/>
    <property type="project" value="WormBase"/>
</dbReference>
<dbReference type="GO" id="GO:0010883">
    <property type="term" value="P:regulation of lipid storage"/>
    <property type="evidence" value="ECO:0000316"/>
    <property type="project" value="WormBase"/>
</dbReference>
<dbReference type="GO" id="GO:0009408">
    <property type="term" value="P:response to heat"/>
    <property type="evidence" value="ECO:0000316"/>
    <property type="project" value="WormBase"/>
</dbReference>
<dbReference type="GO" id="GO:0007165">
    <property type="term" value="P:signal transduction"/>
    <property type="evidence" value="ECO:0007669"/>
    <property type="project" value="InterPro"/>
</dbReference>
<dbReference type="FunFam" id="1.25.10.10:FF:000010">
    <property type="entry name" value="Serine/threonine-protein phosphatase 2A 56 kDa regulatory subunit"/>
    <property type="match status" value="1"/>
</dbReference>
<dbReference type="Gene3D" id="1.25.10.10">
    <property type="entry name" value="Leucine-rich Repeat Variant"/>
    <property type="match status" value="1"/>
</dbReference>
<dbReference type="InterPro" id="IPR011989">
    <property type="entry name" value="ARM-like"/>
</dbReference>
<dbReference type="InterPro" id="IPR016024">
    <property type="entry name" value="ARM-type_fold"/>
</dbReference>
<dbReference type="InterPro" id="IPR002554">
    <property type="entry name" value="PP2A_B56"/>
</dbReference>
<dbReference type="PANTHER" id="PTHR10257">
    <property type="entry name" value="SERINE/THREONINE PROTEIN PHOSPHATASE 2A PP2A REGULATORY SUBUNIT B"/>
    <property type="match status" value="1"/>
</dbReference>
<dbReference type="PANTHER" id="PTHR10257:SF5">
    <property type="entry name" value="WIDERBORST, ISOFORM H"/>
    <property type="match status" value="1"/>
</dbReference>
<dbReference type="Pfam" id="PF01603">
    <property type="entry name" value="B56"/>
    <property type="match status" value="1"/>
</dbReference>
<dbReference type="PIRSF" id="PIRSF028043">
    <property type="entry name" value="PP2A_B56"/>
    <property type="match status" value="1"/>
</dbReference>
<dbReference type="SUPFAM" id="SSF48371">
    <property type="entry name" value="ARM repeat"/>
    <property type="match status" value="1"/>
</dbReference>